<organism>
    <name type="scientific">Arabidopsis thaliana</name>
    <name type="common">Mouse-ear cress</name>
    <dbReference type="NCBI Taxonomy" id="3702"/>
    <lineage>
        <taxon>Eukaryota</taxon>
        <taxon>Viridiplantae</taxon>
        <taxon>Streptophyta</taxon>
        <taxon>Embryophyta</taxon>
        <taxon>Tracheophyta</taxon>
        <taxon>Spermatophyta</taxon>
        <taxon>Magnoliopsida</taxon>
        <taxon>eudicotyledons</taxon>
        <taxon>Gunneridae</taxon>
        <taxon>Pentapetalae</taxon>
        <taxon>rosids</taxon>
        <taxon>malvids</taxon>
        <taxon>Brassicales</taxon>
        <taxon>Brassicaceae</taxon>
        <taxon>Camelineae</taxon>
        <taxon>Arabidopsis</taxon>
    </lineage>
</organism>
<comment type="subunit">
    <text evidence="3">Homodimer.</text>
</comment>
<comment type="interaction">
    <interactant intactId="EBI-15194247">
        <id>Q9FY69</id>
    </interactant>
    <interactant intactId="EBI-15197899">
        <id>Q58G01</id>
        <label>BHLH155</label>
    </interactant>
    <organismsDiffer>false</organismsDiffer>
    <experiments>3</experiments>
</comment>
<comment type="interaction">
    <interactant intactId="EBI-15194247">
        <id>Q9FY69</id>
    </interactant>
    <interactant intactId="EBI-15196985">
        <id>Q7XJU0-2</id>
        <label>BHLH157</label>
    </interactant>
    <organismsDiffer>false</organismsDiffer>
    <experiments>3</experiments>
</comment>
<comment type="interaction">
    <interactant intactId="EBI-15194247">
        <id>Q9FY69</id>
    </interactant>
    <interactant intactId="EBI-15194565">
        <id>Q8S3D2</id>
        <label>BHLH87</label>
    </interactant>
    <organismsDiffer>false</organismsDiffer>
    <experiments>3</experiments>
</comment>
<comment type="subcellular location">
    <subcellularLocation>
        <location evidence="1">Nucleus</location>
    </subcellularLocation>
</comment>
<evidence type="ECO:0000255" key="1">
    <source>
        <dbReference type="PROSITE-ProRule" id="PRU00981"/>
    </source>
</evidence>
<evidence type="ECO:0000256" key="2">
    <source>
        <dbReference type="SAM" id="MobiDB-lite"/>
    </source>
</evidence>
<evidence type="ECO:0000305" key="3"/>
<gene>
    <name type="primary">BHLH143</name>
    <name type="synonym">EN129</name>
    <name type="ordered locus">At5g09460</name>
    <name type="ORF">T5E8.260</name>
</gene>
<reference key="1">
    <citation type="journal article" date="2000" name="Nature">
        <title>Sequence and analysis of chromosome 5 of the plant Arabidopsis thaliana.</title>
        <authorList>
            <person name="Tabata S."/>
            <person name="Kaneko T."/>
            <person name="Nakamura Y."/>
            <person name="Kotani H."/>
            <person name="Kato T."/>
            <person name="Asamizu E."/>
            <person name="Miyajima N."/>
            <person name="Sasamoto S."/>
            <person name="Kimura T."/>
            <person name="Hosouchi T."/>
            <person name="Kawashima K."/>
            <person name="Kohara M."/>
            <person name="Matsumoto M."/>
            <person name="Matsuno A."/>
            <person name="Muraki A."/>
            <person name="Nakayama S."/>
            <person name="Nakazaki N."/>
            <person name="Naruo K."/>
            <person name="Okumura S."/>
            <person name="Shinpo S."/>
            <person name="Takeuchi C."/>
            <person name="Wada T."/>
            <person name="Watanabe A."/>
            <person name="Yamada M."/>
            <person name="Yasuda M."/>
            <person name="Sato S."/>
            <person name="de la Bastide M."/>
            <person name="Huang E."/>
            <person name="Spiegel L."/>
            <person name="Gnoj L."/>
            <person name="O'Shaughnessy A."/>
            <person name="Preston R."/>
            <person name="Habermann K."/>
            <person name="Murray J."/>
            <person name="Johnson D."/>
            <person name="Rohlfing T."/>
            <person name="Nelson J."/>
            <person name="Stoneking T."/>
            <person name="Pepin K."/>
            <person name="Spieth J."/>
            <person name="Sekhon M."/>
            <person name="Armstrong J."/>
            <person name="Becker M."/>
            <person name="Belter E."/>
            <person name="Cordum H."/>
            <person name="Cordes M."/>
            <person name="Courtney L."/>
            <person name="Courtney W."/>
            <person name="Dante M."/>
            <person name="Du H."/>
            <person name="Edwards J."/>
            <person name="Fryman J."/>
            <person name="Haakensen B."/>
            <person name="Lamar E."/>
            <person name="Latreille P."/>
            <person name="Leonard S."/>
            <person name="Meyer R."/>
            <person name="Mulvaney E."/>
            <person name="Ozersky P."/>
            <person name="Riley A."/>
            <person name="Strowmatt C."/>
            <person name="Wagner-McPherson C."/>
            <person name="Wollam A."/>
            <person name="Yoakum M."/>
            <person name="Bell M."/>
            <person name="Dedhia N."/>
            <person name="Parnell L."/>
            <person name="Shah R."/>
            <person name="Rodriguez M."/>
            <person name="Hoon See L."/>
            <person name="Vil D."/>
            <person name="Baker J."/>
            <person name="Kirchoff K."/>
            <person name="Toth K."/>
            <person name="King L."/>
            <person name="Bahret A."/>
            <person name="Miller B."/>
            <person name="Marra M.A."/>
            <person name="Martienssen R."/>
            <person name="McCombie W.R."/>
            <person name="Wilson R.K."/>
            <person name="Murphy G."/>
            <person name="Bancroft I."/>
            <person name="Volckaert G."/>
            <person name="Wambutt R."/>
            <person name="Duesterhoeft A."/>
            <person name="Stiekema W."/>
            <person name="Pohl T."/>
            <person name="Entian K.-D."/>
            <person name="Terryn N."/>
            <person name="Hartley N."/>
            <person name="Bent E."/>
            <person name="Johnson S."/>
            <person name="Langham S.-A."/>
            <person name="McCullagh B."/>
            <person name="Robben J."/>
            <person name="Grymonprez B."/>
            <person name="Zimmermann W."/>
            <person name="Ramsperger U."/>
            <person name="Wedler H."/>
            <person name="Balke K."/>
            <person name="Wedler E."/>
            <person name="Peters S."/>
            <person name="van Staveren M."/>
            <person name="Dirkse W."/>
            <person name="Mooijman P."/>
            <person name="Klein Lankhorst R."/>
            <person name="Weitzenegger T."/>
            <person name="Bothe G."/>
            <person name="Rose M."/>
            <person name="Hauf J."/>
            <person name="Berneiser S."/>
            <person name="Hempel S."/>
            <person name="Feldpausch M."/>
            <person name="Lamberth S."/>
            <person name="Villarroel R."/>
            <person name="Gielen J."/>
            <person name="Ardiles W."/>
            <person name="Bents O."/>
            <person name="Lemcke K."/>
            <person name="Kolesov G."/>
            <person name="Mayer K.F.X."/>
            <person name="Rudd S."/>
            <person name="Schoof H."/>
            <person name="Schueller C."/>
            <person name="Zaccaria P."/>
            <person name="Mewes H.-W."/>
            <person name="Bevan M."/>
            <person name="Fransz P.F."/>
        </authorList>
    </citation>
    <scope>NUCLEOTIDE SEQUENCE [LARGE SCALE GENOMIC DNA]</scope>
    <source>
        <strain>cv. Columbia</strain>
    </source>
</reference>
<reference key="2">
    <citation type="journal article" date="2017" name="Plant J.">
        <title>Araport11: a complete reannotation of the Arabidopsis thaliana reference genome.</title>
        <authorList>
            <person name="Cheng C.Y."/>
            <person name="Krishnakumar V."/>
            <person name="Chan A.P."/>
            <person name="Thibaud-Nissen F."/>
            <person name="Schobel S."/>
            <person name="Town C.D."/>
        </authorList>
    </citation>
    <scope>GENOME REANNOTATION</scope>
    <source>
        <strain>cv. Columbia</strain>
    </source>
</reference>
<reference key="3">
    <citation type="journal article" date="2003" name="Science">
        <title>Empirical analysis of transcriptional activity in the Arabidopsis genome.</title>
        <authorList>
            <person name="Yamada K."/>
            <person name="Lim J."/>
            <person name="Dale J.M."/>
            <person name="Chen H."/>
            <person name="Shinn P."/>
            <person name="Palm C.J."/>
            <person name="Southwick A.M."/>
            <person name="Wu H.C."/>
            <person name="Kim C.J."/>
            <person name="Nguyen M."/>
            <person name="Pham P.K."/>
            <person name="Cheuk R.F."/>
            <person name="Karlin-Newmann G."/>
            <person name="Liu S.X."/>
            <person name="Lam B."/>
            <person name="Sakano H."/>
            <person name="Wu T."/>
            <person name="Yu G."/>
            <person name="Miranda M."/>
            <person name="Quach H.L."/>
            <person name="Tripp M."/>
            <person name="Chang C.H."/>
            <person name="Lee J.M."/>
            <person name="Toriumi M.J."/>
            <person name="Chan M.M."/>
            <person name="Tang C.C."/>
            <person name="Onodera C.S."/>
            <person name="Deng J.M."/>
            <person name="Akiyama K."/>
            <person name="Ansari Y."/>
            <person name="Arakawa T."/>
            <person name="Banh J."/>
            <person name="Banno F."/>
            <person name="Bowser L."/>
            <person name="Brooks S.Y."/>
            <person name="Carninci P."/>
            <person name="Chao Q."/>
            <person name="Choy N."/>
            <person name="Enju A."/>
            <person name="Goldsmith A.D."/>
            <person name="Gurjal M."/>
            <person name="Hansen N.F."/>
            <person name="Hayashizaki Y."/>
            <person name="Johnson-Hopson C."/>
            <person name="Hsuan V.W."/>
            <person name="Iida K."/>
            <person name="Karnes M."/>
            <person name="Khan S."/>
            <person name="Koesema E."/>
            <person name="Ishida J."/>
            <person name="Jiang P.X."/>
            <person name="Jones T."/>
            <person name="Kawai J."/>
            <person name="Kamiya A."/>
            <person name="Meyers C."/>
            <person name="Nakajima M."/>
            <person name="Narusaka M."/>
            <person name="Seki M."/>
            <person name="Sakurai T."/>
            <person name="Satou M."/>
            <person name="Tamse R."/>
            <person name="Vaysberg M."/>
            <person name="Wallender E.K."/>
            <person name="Wong C."/>
            <person name="Yamamura Y."/>
            <person name="Yuan S."/>
            <person name="Shinozaki K."/>
            <person name="Davis R.W."/>
            <person name="Theologis A."/>
            <person name="Ecker J.R."/>
        </authorList>
    </citation>
    <scope>NUCLEOTIDE SEQUENCE [LARGE SCALE MRNA]</scope>
    <source>
        <strain>cv. Columbia</strain>
    </source>
</reference>
<reference key="4">
    <citation type="journal article" date="2003" name="Plant Cell">
        <title>The Arabidopsis basic/helix-loop-helix transcription factor family.</title>
        <authorList>
            <person name="Toledo-Ortiz G."/>
            <person name="Huq E."/>
            <person name="Quail P.H."/>
        </authorList>
    </citation>
    <scope>GENE FAMILY</scope>
    <scope>NOMENCLATURE</scope>
</reference>
<reference key="5">
    <citation type="journal article" date="2003" name="Plant Cell">
        <title>Update on the basic helix-loop-helix transcription factor gene family in Arabidopsis thaliana.</title>
        <authorList>
            <person name="Bailey P.C."/>
            <person name="Martin C."/>
            <person name="Toledo-Ortiz G."/>
            <person name="Quail P.H."/>
            <person name="Huq E."/>
            <person name="Heim M.A."/>
            <person name="Jakoby M."/>
            <person name="Werber M."/>
            <person name="Weisshaar B."/>
        </authorList>
    </citation>
    <scope>GENE FAMILY</scope>
    <scope>NOMENCLATURE</scope>
</reference>
<proteinExistence type="evidence at protein level"/>
<dbReference type="EMBL" id="AL391712">
    <property type="protein sequence ID" value="CAC05472.1"/>
    <property type="molecule type" value="Genomic_DNA"/>
</dbReference>
<dbReference type="EMBL" id="CP002688">
    <property type="protein sequence ID" value="AED91396.1"/>
    <property type="molecule type" value="Genomic_DNA"/>
</dbReference>
<dbReference type="EMBL" id="AY128339">
    <property type="protein sequence ID" value="AAM91542.1"/>
    <property type="molecule type" value="mRNA"/>
</dbReference>
<dbReference type="EMBL" id="BT000009">
    <property type="protein sequence ID" value="AAN15328.1"/>
    <property type="molecule type" value="mRNA"/>
</dbReference>
<dbReference type="RefSeq" id="NP_196508.1">
    <property type="nucleotide sequence ID" value="NM_120983.2"/>
</dbReference>
<dbReference type="SMR" id="Q9FY69"/>
<dbReference type="BioGRID" id="16083">
    <property type="interactions" value="23"/>
</dbReference>
<dbReference type="FunCoup" id="Q9FY69">
    <property type="interactions" value="582"/>
</dbReference>
<dbReference type="IntAct" id="Q9FY69">
    <property type="interactions" value="22"/>
</dbReference>
<dbReference type="STRING" id="3702.Q9FY69"/>
<dbReference type="PaxDb" id="3702-AT5G09460.1"/>
<dbReference type="EnsemblPlants" id="AT5G09460.1">
    <property type="protein sequence ID" value="AT5G09460.1"/>
    <property type="gene ID" value="AT5G09460"/>
</dbReference>
<dbReference type="GeneID" id="830805"/>
<dbReference type="Gramene" id="AT5G09460.1">
    <property type="protein sequence ID" value="AT5G09460.1"/>
    <property type="gene ID" value="AT5G09460"/>
</dbReference>
<dbReference type="KEGG" id="ath:AT5G09460"/>
<dbReference type="Araport" id="AT5G09460"/>
<dbReference type="TAIR" id="AT5G09460">
    <property type="gene designation" value="SACL1"/>
</dbReference>
<dbReference type="eggNOG" id="ENOG502S1PH">
    <property type="taxonomic scope" value="Eukaryota"/>
</dbReference>
<dbReference type="HOGENOM" id="CLU_053960_0_0_1"/>
<dbReference type="InParanoid" id="Q9FY69"/>
<dbReference type="OMA" id="PRQPECL"/>
<dbReference type="PhylomeDB" id="Q9FY69"/>
<dbReference type="PRO" id="PR:Q9FY69"/>
<dbReference type="Proteomes" id="UP000006548">
    <property type="component" value="Chromosome 5"/>
</dbReference>
<dbReference type="ExpressionAtlas" id="Q9FY69">
    <property type="expression patterns" value="baseline and differential"/>
</dbReference>
<dbReference type="GO" id="GO:0005634">
    <property type="term" value="C:nucleus"/>
    <property type="evidence" value="ECO:0007669"/>
    <property type="project" value="UniProtKB-SubCell"/>
</dbReference>
<dbReference type="GO" id="GO:0003677">
    <property type="term" value="F:DNA binding"/>
    <property type="evidence" value="ECO:0007669"/>
    <property type="project" value="UniProtKB-KW"/>
</dbReference>
<dbReference type="GO" id="GO:0003700">
    <property type="term" value="F:DNA-binding transcription factor activity"/>
    <property type="evidence" value="ECO:0000250"/>
    <property type="project" value="TAIR"/>
</dbReference>
<dbReference type="GO" id="GO:0046983">
    <property type="term" value="F:protein dimerization activity"/>
    <property type="evidence" value="ECO:0007669"/>
    <property type="project" value="InterPro"/>
</dbReference>
<dbReference type="GO" id="GO:0006355">
    <property type="term" value="P:regulation of DNA-templated transcription"/>
    <property type="evidence" value="ECO:0000304"/>
    <property type="project" value="TAIR"/>
</dbReference>
<dbReference type="CDD" id="cd18917">
    <property type="entry name" value="bHLH_AtSAC51_like"/>
    <property type="match status" value="1"/>
</dbReference>
<dbReference type="InterPro" id="IPR011598">
    <property type="entry name" value="bHLH_dom"/>
</dbReference>
<dbReference type="InterPro" id="IPR036638">
    <property type="entry name" value="HLH_DNA-bd_sf"/>
</dbReference>
<dbReference type="InterPro" id="IPR037546">
    <property type="entry name" value="SAC51-like"/>
</dbReference>
<dbReference type="PANTHER" id="PTHR36066:SF9">
    <property type="entry name" value="TRANSCRIPTION FACTOR BHLH143"/>
    <property type="match status" value="1"/>
</dbReference>
<dbReference type="PANTHER" id="PTHR36066">
    <property type="entry name" value="TRANSCRIPTION FACTOR BHLH145"/>
    <property type="match status" value="1"/>
</dbReference>
<dbReference type="Pfam" id="PF23173">
    <property type="entry name" value="bHLH_SAC51"/>
    <property type="match status" value="1"/>
</dbReference>
<dbReference type="SUPFAM" id="SSF47459">
    <property type="entry name" value="HLH, helix-loop-helix DNA-binding domain"/>
    <property type="match status" value="1"/>
</dbReference>
<dbReference type="PROSITE" id="PS50888">
    <property type="entry name" value="BHLH"/>
    <property type="match status" value="1"/>
</dbReference>
<feature type="chain" id="PRO_0000358821" description="Transcription factor bHLH143">
    <location>
        <begin position="1"/>
        <end position="326"/>
    </location>
</feature>
<feature type="domain" description="bHLH" evidence="1">
    <location>
        <begin position="263"/>
        <end position="312"/>
    </location>
</feature>
<feature type="region of interest" description="Disordered" evidence="2">
    <location>
        <begin position="175"/>
        <end position="194"/>
    </location>
</feature>
<feature type="region of interest" description="Disordered" evidence="2">
    <location>
        <begin position="234"/>
        <end position="275"/>
    </location>
</feature>
<feature type="compositionally biased region" description="Acidic residues" evidence="2">
    <location>
        <begin position="175"/>
        <end position="189"/>
    </location>
</feature>
<feature type="compositionally biased region" description="Polar residues" evidence="2">
    <location>
        <begin position="255"/>
        <end position="271"/>
    </location>
</feature>
<accession>Q9FY69</accession>
<sequence>MPLDTKQQKWLPLGLNPQACVQDKATEYFRPGIPFPELGKVYAAEHQFRYLQPPFQALLSRYDQQSCGKQVSCLNGRSSNGAAPEGALKSSRKRFIVFDQSGEQTRLLQCGFPLRFPSSMDAERGNILGALHPEKGFSKDHAIQEKILQHEDHENGEEDSEMHEDTEEINALLYSDDDDNDDWESDDEVMSTGHSPFTVEQQACNITTEELDETESTVDGPLLKRQKLLDHSYRDSSPSLVGTTKVKGLSDENLPESNISSKQETGSGLSDEQSRKDKIHTALRILESVVPGAKGKEALLLLDEAIDYLKLLKQSLNSSKGLNNHW</sequence>
<keyword id="KW-0238">DNA-binding</keyword>
<keyword id="KW-0539">Nucleus</keyword>
<keyword id="KW-1185">Reference proteome</keyword>
<keyword id="KW-0804">Transcription</keyword>
<keyword id="KW-0805">Transcription regulation</keyword>
<protein>
    <recommendedName>
        <fullName>Transcription factor bHLH143</fullName>
    </recommendedName>
    <alternativeName>
        <fullName>Basic helix-loop-helix protein 143</fullName>
        <shortName>AtbHLH143</shortName>
        <shortName>bHLH 143</shortName>
    </alternativeName>
    <alternativeName>
        <fullName>Transcription factor EN 129</fullName>
    </alternativeName>
    <alternativeName>
        <fullName>bHLH transcription factor bHLH143</fullName>
    </alternativeName>
</protein>
<name>BH143_ARATH</name>